<feature type="chain" id="PRO_1000193075" description="Dihydroorotase">
    <location>
        <begin position="1"/>
        <end position="348"/>
    </location>
</feature>
<feature type="active site" evidence="1">
    <location>
        <position position="251"/>
    </location>
</feature>
<feature type="binding site" evidence="1">
    <location>
        <position position="17"/>
    </location>
    <ligand>
        <name>Zn(2+)</name>
        <dbReference type="ChEBI" id="CHEBI:29105"/>
        <label>1</label>
    </ligand>
</feature>
<feature type="binding site" evidence="1">
    <location>
        <begin position="19"/>
        <end position="21"/>
    </location>
    <ligand>
        <name>substrate</name>
    </ligand>
</feature>
<feature type="binding site" evidence="1">
    <location>
        <position position="19"/>
    </location>
    <ligand>
        <name>Zn(2+)</name>
        <dbReference type="ChEBI" id="CHEBI:29105"/>
        <label>1</label>
    </ligand>
</feature>
<feature type="binding site" evidence="1">
    <location>
        <position position="45"/>
    </location>
    <ligand>
        <name>substrate</name>
    </ligand>
</feature>
<feature type="binding site" description="via carbamate group" evidence="1">
    <location>
        <position position="103"/>
    </location>
    <ligand>
        <name>Zn(2+)</name>
        <dbReference type="ChEBI" id="CHEBI:29105"/>
        <label>1</label>
    </ligand>
</feature>
<feature type="binding site" description="via carbamate group" evidence="1">
    <location>
        <position position="103"/>
    </location>
    <ligand>
        <name>Zn(2+)</name>
        <dbReference type="ChEBI" id="CHEBI:29105"/>
        <label>2</label>
    </ligand>
</feature>
<feature type="binding site" evidence="1">
    <location>
        <position position="140"/>
    </location>
    <ligand>
        <name>substrate</name>
    </ligand>
</feature>
<feature type="binding site" evidence="1">
    <location>
        <position position="140"/>
    </location>
    <ligand>
        <name>Zn(2+)</name>
        <dbReference type="ChEBI" id="CHEBI:29105"/>
        <label>2</label>
    </ligand>
</feature>
<feature type="binding site" evidence="1">
    <location>
        <position position="178"/>
    </location>
    <ligand>
        <name>Zn(2+)</name>
        <dbReference type="ChEBI" id="CHEBI:29105"/>
        <label>2</label>
    </ligand>
</feature>
<feature type="binding site" evidence="1">
    <location>
        <position position="223"/>
    </location>
    <ligand>
        <name>substrate</name>
    </ligand>
</feature>
<feature type="binding site" evidence="1">
    <location>
        <position position="251"/>
    </location>
    <ligand>
        <name>Zn(2+)</name>
        <dbReference type="ChEBI" id="CHEBI:29105"/>
        <label>1</label>
    </ligand>
</feature>
<feature type="binding site" evidence="1">
    <location>
        <position position="255"/>
    </location>
    <ligand>
        <name>substrate</name>
    </ligand>
</feature>
<feature type="binding site" evidence="1">
    <location>
        <position position="267"/>
    </location>
    <ligand>
        <name>substrate</name>
    </ligand>
</feature>
<feature type="modified residue" description="N6-carboxylysine" evidence="1">
    <location>
        <position position="103"/>
    </location>
</feature>
<evidence type="ECO:0000255" key="1">
    <source>
        <dbReference type="HAMAP-Rule" id="MF_00219"/>
    </source>
</evidence>
<accession>B7M937</accession>
<dbReference type="EC" id="3.5.2.3" evidence="1"/>
<dbReference type="EMBL" id="CU928160">
    <property type="protein sequence ID" value="CAQ97961.1"/>
    <property type="molecule type" value="Genomic_DNA"/>
</dbReference>
<dbReference type="RefSeq" id="WP_000126556.1">
    <property type="nucleotide sequence ID" value="NC_011741.1"/>
</dbReference>
<dbReference type="SMR" id="B7M937"/>
<dbReference type="MEROPS" id="M38.A02"/>
<dbReference type="KEGG" id="ecr:ECIAI1_1097"/>
<dbReference type="HOGENOM" id="CLU_041558_1_0_6"/>
<dbReference type="UniPathway" id="UPA00070">
    <property type="reaction ID" value="UER00117"/>
</dbReference>
<dbReference type="GO" id="GO:0005829">
    <property type="term" value="C:cytosol"/>
    <property type="evidence" value="ECO:0007669"/>
    <property type="project" value="TreeGrafter"/>
</dbReference>
<dbReference type="GO" id="GO:0004151">
    <property type="term" value="F:dihydroorotase activity"/>
    <property type="evidence" value="ECO:0007669"/>
    <property type="project" value="UniProtKB-UniRule"/>
</dbReference>
<dbReference type="GO" id="GO:0008270">
    <property type="term" value="F:zinc ion binding"/>
    <property type="evidence" value="ECO:0007669"/>
    <property type="project" value="UniProtKB-UniRule"/>
</dbReference>
<dbReference type="GO" id="GO:0006207">
    <property type="term" value="P:'de novo' pyrimidine nucleobase biosynthetic process"/>
    <property type="evidence" value="ECO:0007669"/>
    <property type="project" value="TreeGrafter"/>
</dbReference>
<dbReference type="GO" id="GO:0044205">
    <property type="term" value="P:'de novo' UMP biosynthetic process"/>
    <property type="evidence" value="ECO:0007669"/>
    <property type="project" value="UniProtKB-UniRule"/>
</dbReference>
<dbReference type="CDD" id="cd01294">
    <property type="entry name" value="DHOase"/>
    <property type="match status" value="1"/>
</dbReference>
<dbReference type="FunFam" id="3.20.20.140:FF:000006">
    <property type="entry name" value="Dihydroorotase"/>
    <property type="match status" value="1"/>
</dbReference>
<dbReference type="Gene3D" id="3.20.20.140">
    <property type="entry name" value="Metal-dependent hydrolases"/>
    <property type="match status" value="1"/>
</dbReference>
<dbReference type="HAMAP" id="MF_00219">
    <property type="entry name" value="PyrC_classII"/>
    <property type="match status" value="1"/>
</dbReference>
<dbReference type="InterPro" id="IPR006680">
    <property type="entry name" value="Amidohydro-rel"/>
</dbReference>
<dbReference type="InterPro" id="IPR004721">
    <property type="entry name" value="DHOdimr"/>
</dbReference>
<dbReference type="InterPro" id="IPR002195">
    <property type="entry name" value="Dihydroorotase_CS"/>
</dbReference>
<dbReference type="InterPro" id="IPR032466">
    <property type="entry name" value="Metal_Hydrolase"/>
</dbReference>
<dbReference type="NCBIfam" id="TIGR00856">
    <property type="entry name" value="pyrC_dimer"/>
    <property type="match status" value="1"/>
</dbReference>
<dbReference type="PANTHER" id="PTHR43137">
    <property type="entry name" value="DIHYDROOROTASE"/>
    <property type="match status" value="1"/>
</dbReference>
<dbReference type="PANTHER" id="PTHR43137:SF1">
    <property type="entry name" value="DIHYDROOROTASE"/>
    <property type="match status" value="1"/>
</dbReference>
<dbReference type="Pfam" id="PF01979">
    <property type="entry name" value="Amidohydro_1"/>
    <property type="match status" value="1"/>
</dbReference>
<dbReference type="PIRSF" id="PIRSF001237">
    <property type="entry name" value="DHOdimr"/>
    <property type="match status" value="1"/>
</dbReference>
<dbReference type="SUPFAM" id="SSF51556">
    <property type="entry name" value="Metallo-dependent hydrolases"/>
    <property type="match status" value="1"/>
</dbReference>
<dbReference type="PROSITE" id="PS00482">
    <property type="entry name" value="DIHYDROOROTASE_1"/>
    <property type="match status" value="1"/>
</dbReference>
<dbReference type="PROSITE" id="PS00483">
    <property type="entry name" value="DIHYDROOROTASE_2"/>
    <property type="match status" value="1"/>
</dbReference>
<protein>
    <recommendedName>
        <fullName evidence="1">Dihydroorotase</fullName>
        <shortName evidence="1">DHOase</shortName>
        <ecNumber evidence="1">3.5.2.3</ecNumber>
    </recommendedName>
</protein>
<gene>
    <name evidence="1" type="primary">pyrC</name>
    <name type="ordered locus">ECIAI1_1097</name>
</gene>
<reference key="1">
    <citation type="journal article" date="2009" name="PLoS Genet.">
        <title>Organised genome dynamics in the Escherichia coli species results in highly diverse adaptive paths.</title>
        <authorList>
            <person name="Touchon M."/>
            <person name="Hoede C."/>
            <person name="Tenaillon O."/>
            <person name="Barbe V."/>
            <person name="Baeriswyl S."/>
            <person name="Bidet P."/>
            <person name="Bingen E."/>
            <person name="Bonacorsi S."/>
            <person name="Bouchier C."/>
            <person name="Bouvet O."/>
            <person name="Calteau A."/>
            <person name="Chiapello H."/>
            <person name="Clermont O."/>
            <person name="Cruveiller S."/>
            <person name="Danchin A."/>
            <person name="Diard M."/>
            <person name="Dossat C."/>
            <person name="Karoui M.E."/>
            <person name="Frapy E."/>
            <person name="Garry L."/>
            <person name="Ghigo J.M."/>
            <person name="Gilles A.M."/>
            <person name="Johnson J."/>
            <person name="Le Bouguenec C."/>
            <person name="Lescat M."/>
            <person name="Mangenot S."/>
            <person name="Martinez-Jehanne V."/>
            <person name="Matic I."/>
            <person name="Nassif X."/>
            <person name="Oztas S."/>
            <person name="Petit M.A."/>
            <person name="Pichon C."/>
            <person name="Rouy Z."/>
            <person name="Ruf C.S."/>
            <person name="Schneider D."/>
            <person name="Tourret J."/>
            <person name="Vacherie B."/>
            <person name="Vallenet D."/>
            <person name="Medigue C."/>
            <person name="Rocha E.P.C."/>
            <person name="Denamur E."/>
        </authorList>
    </citation>
    <scope>NUCLEOTIDE SEQUENCE [LARGE SCALE GENOMIC DNA]</scope>
    <source>
        <strain>IAI1</strain>
    </source>
</reference>
<sequence length="348" mass="38826">MTAPSQVLKIRRPDDWHLHLRDGDMLKTVVPYTSEIYGRAIVMPNLAPPVTTVEAAVAYRQRILDAVPAGHNFTPLMTCYLTDSLDPNELERGFNEGVFTAAKLYPANATTNSSHGVTSIDAIMPVLERMEKIGMPLLVHGEVTHADIDIFDREARFIESVMEPLRQRLTALKVVFEHITTKDAADYVRDGNERLAATITPQHLMFNRNHMLVGGVRPHLYCLPILKRNIHQQALRELVASGFNRVFLGTDSAPHARHRKESSCGCAGCFNAPTALGSYATVFEEMNALQHFEAFCSVNGPQFYGLPVNDTFIELVREEQQVAESIALTDDTLVPFLAGETVRWSVKQ</sequence>
<organism>
    <name type="scientific">Escherichia coli O8 (strain IAI1)</name>
    <dbReference type="NCBI Taxonomy" id="585034"/>
    <lineage>
        <taxon>Bacteria</taxon>
        <taxon>Pseudomonadati</taxon>
        <taxon>Pseudomonadota</taxon>
        <taxon>Gammaproteobacteria</taxon>
        <taxon>Enterobacterales</taxon>
        <taxon>Enterobacteriaceae</taxon>
        <taxon>Escherichia</taxon>
    </lineage>
</organism>
<keyword id="KW-0378">Hydrolase</keyword>
<keyword id="KW-0479">Metal-binding</keyword>
<keyword id="KW-0665">Pyrimidine biosynthesis</keyword>
<keyword id="KW-0862">Zinc</keyword>
<comment type="function">
    <text evidence="1">Catalyzes the reversible cyclization of carbamoyl aspartate to dihydroorotate.</text>
</comment>
<comment type="catalytic activity">
    <reaction evidence="1">
        <text>(S)-dihydroorotate + H2O = N-carbamoyl-L-aspartate + H(+)</text>
        <dbReference type="Rhea" id="RHEA:24296"/>
        <dbReference type="ChEBI" id="CHEBI:15377"/>
        <dbReference type="ChEBI" id="CHEBI:15378"/>
        <dbReference type="ChEBI" id="CHEBI:30864"/>
        <dbReference type="ChEBI" id="CHEBI:32814"/>
        <dbReference type="EC" id="3.5.2.3"/>
    </reaction>
</comment>
<comment type="cofactor">
    <cofactor evidence="1">
        <name>Zn(2+)</name>
        <dbReference type="ChEBI" id="CHEBI:29105"/>
    </cofactor>
    <text evidence="1">Binds 2 Zn(2+) ions per subunit.</text>
</comment>
<comment type="pathway">
    <text evidence="1">Pyrimidine metabolism; UMP biosynthesis via de novo pathway; (S)-dihydroorotate from bicarbonate: step 3/3.</text>
</comment>
<comment type="subunit">
    <text evidence="1">Homodimer.</text>
</comment>
<comment type="similarity">
    <text evidence="1">Belongs to the metallo-dependent hydrolases superfamily. DHOase family. Class II DHOase subfamily.</text>
</comment>
<name>PYRC_ECO8A</name>
<proteinExistence type="inferred from homology"/>